<evidence type="ECO:0000255" key="1">
    <source>
        <dbReference type="HAMAP-Rule" id="MF_01201"/>
    </source>
</evidence>
<accession>Q1WV14</accession>
<gene>
    <name type="primary">alr</name>
    <name type="ordered locus">LSL_0358</name>
</gene>
<dbReference type="EC" id="5.1.1.1" evidence="1"/>
<dbReference type="EMBL" id="CP000233">
    <property type="protein sequence ID" value="ABD99171.1"/>
    <property type="molecule type" value="Genomic_DNA"/>
</dbReference>
<dbReference type="RefSeq" id="WP_011475712.1">
    <property type="nucleotide sequence ID" value="NC_007929.1"/>
</dbReference>
<dbReference type="RefSeq" id="YP_535254.1">
    <property type="nucleotide sequence ID" value="NC_007929.1"/>
</dbReference>
<dbReference type="SMR" id="Q1WV14"/>
<dbReference type="STRING" id="362948.LSL_0358"/>
<dbReference type="KEGG" id="lsl:LSL_0358"/>
<dbReference type="PATRIC" id="fig|362948.14.peg.434"/>
<dbReference type="HOGENOM" id="CLU_028393_2_1_9"/>
<dbReference type="OrthoDB" id="9813814at2"/>
<dbReference type="BRENDA" id="5.1.1.1">
    <property type="organism ID" value="2895"/>
</dbReference>
<dbReference type="UniPathway" id="UPA00042">
    <property type="reaction ID" value="UER00497"/>
</dbReference>
<dbReference type="Proteomes" id="UP000006559">
    <property type="component" value="Chromosome"/>
</dbReference>
<dbReference type="GO" id="GO:0005829">
    <property type="term" value="C:cytosol"/>
    <property type="evidence" value="ECO:0007669"/>
    <property type="project" value="TreeGrafter"/>
</dbReference>
<dbReference type="GO" id="GO:0008784">
    <property type="term" value="F:alanine racemase activity"/>
    <property type="evidence" value="ECO:0007669"/>
    <property type="project" value="UniProtKB-UniRule"/>
</dbReference>
<dbReference type="GO" id="GO:0030170">
    <property type="term" value="F:pyridoxal phosphate binding"/>
    <property type="evidence" value="ECO:0007669"/>
    <property type="project" value="UniProtKB-UniRule"/>
</dbReference>
<dbReference type="GO" id="GO:0030632">
    <property type="term" value="P:D-alanine biosynthetic process"/>
    <property type="evidence" value="ECO:0007669"/>
    <property type="project" value="UniProtKB-UniRule"/>
</dbReference>
<dbReference type="GO" id="GO:0009252">
    <property type="term" value="P:peptidoglycan biosynthetic process"/>
    <property type="evidence" value="ECO:0007669"/>
    <property type="project" value="TreeGrafter"/>
</dbReference>
<dbReference type="CDD" id="cd00430">
    <property type="entry name" value="PLPDE_III_AR"/>
    <property type="match status" value="1"/>
</dbReference>
<dbReference type="FunFam" id="2.40.37.10:FF:000006">
    <property type="entry name" value="Alanine racemase"/>
    <property type="match status" value="1"/>
</dbReference>
<dbReference type="FunFam" id="3.20.20.10:FF:000002">
    <property type="entry name" value="Alanine racemase"/>
    <property type="match status" value="1"/>
</dbReference>
<dbReference type="Gene3D" id="3.20.20.10">
    <property type="entry name" value="Alanine racemase"/>
    <property type="match status" value="1"/>
</dbReference>
<dbReference type="Gene3D" id="2.40.37.10">
    <property type="entry name" value="Lyase, Ornithine Decarboxylase, Chain A, domain 1"/>
    <property type="match status" value="1"/>
</dbReference>
<dbReference type="HAMAP" id="MF_01201">
    <property type="entry name" value="Ala_racemase"/>
    <property type="match status" value="1"/>
</dbReference>
<dbReference type="InterPro" id="IPR000821">
    <property type="entry name" value="Ala_racemase"/>
</dbReference>
<dbReference type="InterPro" id="IPR009006">
    <property type="entry name" value="Ala_racemase/Decarboxylase_C"/>
</dbReference>
<dbReference type="InterPro" id="IPR011079">
    <property type="entry name" value="Ala_racemase_C"/>
</dbReference>
<dbReference type="InterPro" id="IPR001608">
    <property type="entry name" value="Ala_racemase_N"/>
</dbReference>
<dbReference type="InterPro" id="IPR020622">
    <property type="entry name" value="Ala_racemase_pyridoxalP-BS"/>
</dbReference>
<dbReference type="InterPro" id="IPR029066">
    <property type="entry name" value="PLP-binding_barrel"/>
</dbReference>
<dbReference type="NCBIfam" id="TIGR00492">
    <property type="entry name" value="alr"/>
    <property type="match status" value="1"/>
</dbReference>
<dbReference type="PANTHER" id="PTHR30511">
    <property type="entry name" value="ALANINE RACEMASE"/>
    <property type="match status" value="1"/>
</dbReference>
<dbReference type="PANTHER" id="PTHR30511:SF0">
    <property type="entry name" value="ALANINE RACEMASE, CATABOLIC-RELATED"/>
    <property type="match status" value="1"/>
</dbReference>
<dbReference type="Pfam" id="PF00842">
    <property type="entry name" value="Ala_racemase_C"/>
    <property type="match status" value="1"/>
</dbReference>
<dbReference type="Pfam" id="PF01168">
    <property type="entry name" value="Ala_racemase_N"/>
    <property type="match status" value="1"/>
</dbReference>
<dbReference type="PRINTS" id="PR00992">
    <property type="entry name" value="ALARACEMASE"/>
</dbReference>
<dbReference type="SMART" id="SM01005">
    <property type="entry name" value="Ala_racemase_C"/>
    <property type="match status" value="1"/>
</dbReference>
<dbReference type="SUPFAM" id="SSF50621">
    <property type="entry name" value="Alanine racemase C-terminal domain-like"/>
    <property type="match status" value="1"/>
</dbReference>
<dbReference type="SUPFAM" id="SSF51419">
    <property type="entry name" value="PLP-binding barrel"/>
    <property type="match status" value="1"/>
</dbReference>
<dbReference type="PROSITE" id="PS00395">
    <property type="entry name" value="ALANINE_RACEMASE"/>
    <property type="match status" value="1"/>
</dbReference>
<sequence length="371" mass="40971">MVIGRHRNTRAIISLEAIKHNVATQISKLKDGQSLFAVVKANAYGHGMIPVAKAAKEAGANGFCVAIIDEGIALRESGIKDPILILGVNPASEAVCMAKHDLSVAVGTLEFLTEAQKLLQEEKQRLKIHLALDTGMGRIGFRNTEDLKEAVDFIEKHSDQLKCEGVFTHFSTADSKDPAYFEKQSQKFDELVGVLKKKPKYIHQANSATALWHPNFEGNLVRMGISMYGLNPSGDMIDETWNLEPALSLESELVAVKEVEAGSSIGYGATYTSSQSEWIGTVPIGYADGWLRRMQGFKVLIDGQYCEIVGRVCMDQFMVRLPKKYDLGTKVTLIGENNGKVITAQDVANYADTIHYEIMCNITERVPRIYK</sequence>
<keyword id="KW-0413">Isomerase</keyword>
<keyword id="KW-0663">Pyridoxal phosphate</keyword>
<keyword id="KW-1185">Reference proteome</keyword>
<organism>
    <name type="scientific">Ligilactobacillus salivarius (strain UCC118)</name>
    <name type="common">Lactobacillus salivarius</name>
    <dbReference type="NCBI Taxonomy" id="362948"/>
    <lineage>
        <taxon>Bacteria</taxon>
        <taxon>Bacillati</taxon>
        <taxon>Bacillota</taxon>
        <taxon>Bacilli</taxon>
        <taxon>Lactobacillales</taxon>
        <taxon>Lactobacillaceae</taxon>
        <taxon>Ligilactobacillus</taxon>
    </lineage>
</organism>
<reference key="1">
    <citation type="journal article" date="2006" name="Proc. Natl. Acad. Sci. U.S.A.">
        <title>Multireplicon genome architecture of Lactobacillus salivarius.</title>
        <authorList>
            <person name="Claesson M.J."/>
            <person name="Li Y."/>
            <person name="Leahy S."/>
            <person name="Canchaya C."/>
            <person name="van Pijkeren J.P."/>
            <person name="Cerdeno-Tarraga A.M."/>
            <person name="Parkhill J."/>
            <person name="Flynn S."/>
            <person name="O'Sullivan G.C."/>
            <person name="Collins J.K."/>
            <person name="Higgins D."/>
            <person name="Shanahan F."/>
            <person name="Fitzgerald G.F."/>
            <person name="van Sinderen D."/>
            <person name="O'Toole P.W."/>
        </authorList>
    </citation>
    <scope>NUCLEOTIDE SEQUENCE [LARGE SCALE GENOMIC DNA]</scope>
    <source>
        <strain>UCC118</strain>
    </source>
</reference>
<proteinExistence type="inferred from homology"/>
<name>ALR_LIGS1</name>
<feature type="chain" id="PRO_1000066003" description="Alanine racemase">
    <location>
        <begin position="1"/>
        <end position="371"/>
    </location>
</feature>
<feature type="active site" description="Proton acceptor; specific for D-alanine" evidence="1">
    <location>
        <position position="40"/>
    </location>
</feature>
<feature type="active site" description="Proton acceptor; specific for L-alanine" evidence="1">
    <location>
        <position position="267"/>
    </location>
</feature>
<feature type="binding site" evidence="1">
    <location>
        <position position="138"/>
    </location>
    <ligand>
        <name>substrate</name>
    </ligand>
</feature>
<feature type="binding site" evidence="1">
    <location>
        <position position="314"/>
    </location>
    <ligand>
        <name>substrate</name>
    </ligand>
</feature>
<feature type="modified residue" description="N6-(pyridoxal phosphate)lysine" evidence="1">
    <location>
        <position position="40"/>
    </location>
</feature>
<comment type="function">
    <text evidence="1">Catalyzes the interconversion of L-alanine and D-alanine. May also act on other amino acids.</text>
</comment>
<comment type="catalytic activity">
    <reaction evidence="1">
        <text>L-alanine = D-alanine</text>
        <dbReference type="Rhea" id="RHEA:20249"/>
        <dbReference type="ChEBI" id="CHEBI:57416"/>
        <dbReference type="ChEBI" id="CHEBI:57972"/>
        <dbReference type="EC" id="5.1.1.1"/>
    </reaction>
</comment>
<comment type="cofactor">
    <cofactor evidence="1">
        <name>pyridoxal 5'-phosphate</name>
        <dbReference type="ChEBI" id="CHEBI:597326"/>
    </cofactor>
</comment>
<comment type="pathway">
    <text evidence="1">Amino-acid biosynthesis; D-alanine biosynthesis; D-alanine from L-alanine: step 1/1.</text>
</comment>
<comment type="similarity">
    <text evidence="1">Belongs to the alanine racemase family.</text>
</comment>
<protein>
    <recommendedName>
        <fullName evidence="1">Alanine racemase</fullName>
        <ecNumber evidence="1">5.1.1.1</ecNumber>
    </recommendedName>
</protein>